<protein>
    <recommendedName>
        <fullName evidence="13">Histone-lysine N-methyltransferase KMT5B</fullName>
    </recommendedName>
    <alternativeName>
        <fullName evidence="1">Lysine-specific methyltransferase 5B</fullName>
    </alternativeName>
    <alternativeName>
        <fullName>Suppressor of variegation 4-20 homolog 1</fullName>
        <shortName>Su(var)4-20 homolog 1</shortName>
        <shortName>Suv4-20h1</shortName>
    </alternativeName>
    <alternativeName>
        <fullName evidence="13">[histone H4]-N-methyl-L-lysine20 N-methyltransferase KMT5B</fullName>
        <ecNumber evidence="5 9 10">2.1.1.362</ecNumber>
    </alternativeName>
    <alternativeName>
        <fullName evidence="13">[histone H4]-lysine20 N-methyltransferase KMT5B</fullName>
        <ecNumber evidence="1">2.1.1.361</ecNumber>
    </alternativeName>
</protein>
<sequence>MKWLGDSKNMVVNGRRNGGKLSNDHQQNQSKLQQHSGKDTLKTGRNAVERRSSRCHGNSGFEGQSRYVPSSGMSAKELCENDDLATSLVLDPYLGFQTHKMNTSAFPSRSSRHISKADSFSHNNPVRFRPIKGRQEELKEVIERFKKDEHLEKAFKCLTSGEWARHYFLNKNKMQEKLFKEHVFIYLRMFATDSGFEILPCNRYSSEQNGAKIVATKEWKRNDKIELLVGCIAELSEIEENMLLRHGENDFSVMYSTRKNCAQLWLGPAAFINHDCRPNCKFVSTGRDTACVKALRDIEPGEEISCYYGDGFFGENNEFCECYTCERRGTGAFKSRVGLPAPAPVINSKYGLRETDKRLNRLKKLGDSSKNSDSQSVSSNTDADTTQEKDNATSNRKSSVGVKKSSKSRALTRPSMPRVPAASNSTSPKLVHTNNPRVPKKLRKPAKPLLSKIRLRNHCKRLDQKSASRKLEMGSLVLKEPKVVLYKNLPIKKEREPEGPAHAAVGSGCLTRHAAREHRQNHGRGAHSQGDSLPCTYTTRRSLRTRTGLKETTDIKLEPSPLDGYKNGILEPCPDSGQQPTPEVLEELAPETAHREEASQECPKNDSCLSRKKFRQVKPVKHLAKTEDCSPEHSFPGKDGLPDLPGSHPDQGEPSGTVRVPVSHTDSAPSPVGCSVVAPDSFTKDSFRTAQSKKKRRVTRYDAQLILENSSGIPKLTLRRRHDSSSKTNDHESDGVNSSKISIKLSKDHDSDSNLYVAKLSNGVSAGPGSSSTKLKIQLKRDEESRGPCAEGLHENGVCCSDPLSLLESQMEVDDYSQYEEDSTDESSSSEGEEEEEDCEDDFDDDFIPLPPAKRLRLIVGKDSIDIDISSRRREDQSLRLNA</sequence>
<feature type="chain" id="PRO_0000281788" description="Histone-lysine N-methyltransferase KMT5B">
    <location>
        <begin position="1"/>
        <end position="883"/>
    </location>
</feature>
<feature type="domain" description="SET" evidence="2">
    <location>
        <begin position="194"/>
        <end position="309"/>
    </location>
</feature>
<feature type="region of interest" description="Disordered" evidence="4">
    <location>
        <begin position="1"/>
        <end position="67"/>
    </location>
</feature>
<feature type="region of interest" description="Disordered" evidence="4">
    <location>
        <begin position="364"/>
        <end position="442"/>
    </location>
</feature>
<feature type="region of interest" description="Disordered" evidence="4">
    <location>
        <begin position="613"/>
        <end position="750"/>
    </location>
</feature>
<feature type="region of interest" description="Disordered" evidence="4">
    <location>
        <begin position="810"/>
        <end position="848"/>
    </location>
</feature>
<feature type="compositionally biased region" description="Polar residues" evidence="4">
    <location>
        <begin position="24"/>
        <end position="35"/>
    </location>
</feature>
<feature type="compositionally biased region" description="Basic and acidic residues" evidence="4">
    <location>
        <begin position="36"/>
        <end position="52"/>
    </location>
</feature>
<feature type="compositionally biased region" description="Low complexity" evidence="4">
    <location>
        <begin position="368"/>
        <end position="379"/>
    </location>
</feature>
<feature type="compositionally biased region" description="Polar residues" evidence="4">
    <location>
        <begin position="422"/>
        <end position="436"/>
    </location>
</feature>
<feature type="compositionally biased region" description="Basic residues" evidence="4">
    <location>
        <begin position="613"/>
        <end position="623"/>
    </location>
</feature>
<feature type="compositionally biased region" description="Basic and acidic residues" evidence="4">
    <location>
        <begin position="723"/>
        <end position="734"/>
    </location>
</feature>
<feature type="compositionally biased region" description="Acidic residues" evidence="4">
    <location>
        <begin position="811"/>
        <end position="825"/>
    </location>
</feature>
<feature type="compositionally biased region" description="Acidic residues" evidence="4">
    <location>
        <begin position="831"/>
        <end position="847"/>
    </location>
</feature>
<feature type="binding site" evidence="9 15">
    <location>
        <position position="99"/>
    </location>
    <ligand>
        <name>S-adenosyl-L-methionine</name>
        <dbReference type="ChEBI" id="CHEBI:59789"/>
    </ligand>
</feature>
<feature type="binding site" evidence="9 15">
    <location>
        <begin position="204"/>
        <end position="207"/>
    </location>
    <ligand>
        <name>S-adenosyl-L-methionine</name>
        <dbReference type="ChEBI" id="CHEBI:59789"/>
    </ligand>
</feature>
<feature type="binding site" evidence="9 15">
    <location>
        <position position="211"/>
    </location>
    <ligand>
        <name>S-adenosyl-L-methionine</name>
        <dbReference type="ChEBI" id="CHEBI:59789"/>
    </ligand>
</feature>
<feature type="binding site" evidence="9 15">
    <location>
        <position position="258"/>
    </location>
    <ligand>
        <name>S-adenosyl-L-methionine</name>
        <dbReference type="ChEBI" id="CHEBI:59789"/>
    </ligand>
</feature>
<feature type="binding site" evidence="9 15">
    <location>
        <begin position="273"/>
        <end position="274"/>
    </location>
    <ligand>
        <name>S-adenosyl-L-methionine</name>
        <dbReference type="ChEBI" id="CHEBI:59789"/>
    </ligand>
</feature>
<feature type="binding site" evidence="9 15">
    <location>
        <position position="276"/>
    </location>
    <ligand>
        <name>Zn(2+)</name>
        <dbReference type="ChEBI" id="CHEBI:29105"/>
    </ligand>
</feature>
<feature type="binding site" evidence="9 15">
    <location>
        <position position="320"/>
    </location>
    <ligand>
        <name>Zn(2+)</name>
        <dbReference type="ChEBI" id="CHEBI:29105"/>
    </ligand>
</feature>
<feature type="binding site" evidence="9 15">
    <location>
        <position position="321"/>
    </location>
    <ligand>
        <name>S-adenosyl-L-methionine</name>
        <dbReference type="ChEBI" id="CHEBI:59789"/>
    </ligand>
</feature>
<feature type="binding site" evidence="9 15">
    <location>
        <position position="322"/>
    </location>
    <ligand>
        <name>Zn(2+)</name>
        <dbReference type="ChEBI" id="CHEBI:29105"/>
    </ligand>
</feature>
<feature type="binding site" evidence="9 15">
    <location>
        <position position="325"/>
    </location>
    <ligand>
        <name>Zn(2+)</name>
        <dbReference type="ChEBI" id="CHEBI:29105"/>
    </ligand>
</feature>
<feature type="cross-link" description="Glycyl lysine isopeptide (Lys-Gly) (interchain with G-Cter in SUMO2)" evidence="1">
    <location>
        <position position="556"/>
    </location>
</feature>
<feature type="splice variant" id="VSP_024053" description="In isoform 3 and isoform 5." evidence="11 12">
    <location>
        <begin position="104"/>
        <end position="126"/>
    </location>
</feature>
<feature type="splice variant" id="VSP_024054" description="In isoform 4." evidence="11 12">
    <location>
        <begin position="328"/>
        <end position="883"/>
    </location>
</feature>
<feature type="splice variant" id="VSP_024055" description="In isoform 2." evidence="12">
    <original>TS</original>
    <variation>SK</variation>
    <location>
        <begin position="393"/>
        <end position="394"/>
    </location>
</feature>
<feature type="splice variant" id="VSP_024056" description="In isoform 2." evidence="12">
    <location>
        <begin position="395"/>
        <end position="883"/>
    </location>
</feature>
<feature type="splice variant" id="VSP_024057" description="In isoform 5." evidence="11">
    <original>EGEEEEEDCEDDFDDDFIPLPPAKRLRLIVGKDSIDIDISSRRREDQSLRLNA</original>
    <variation>SGKAAEANCW</variation>
    <location>
        <begin position="831"/>
        <end position="883"/>
    </location>
</feature>
<feature type="mutagenesis site" description="Loss of methyltransferase activity for H4K20me1 peptide." evidence="9">
    <original>F</original>
    <variation>Y</variation>
    <location>
        <position position="282"/>
    </location>
</feature>
<feature type="sequence conflict" description="In Ref. 3; AAH75709." evidence="13" ref="3">
    <original>S</original>
    <variation>N</variation>
    <location>
        <position position="53"/>
    </location>
</feature>
<feature type="sequence conflict" description="In Ref. 2; AAH11214." evidence="13" ref="2">
    <original>K</original>
    <variation>E</variation>
    <location>
        <position position="153"/>
    </location>
</feature>
<feature type="sequence conflict" description="In Ref. 1; BAC39834." evidence="13" ref="1">
    <original>V</original>
    <variation>L</variation>
    <location>
        <position position="292"/>
    </location>
</feature>
<feature type="sequence conflict" description="In Ref. 2; BAE31010." evidence="13" ref="2">
    <original>R</original>
    <variation>Q</variation>
    <location>
        <position position="328"/>
    </location>
</feature>
<feature type="sequence conflict" description="In Ref. 3; AAH75709." evidence="13" ref="3">
    <original>P</original>
    <variation>A</variation>
    <location>
        <position position="428"/>
    </location>
</feature>
<feature type="sequence conflict" description="In Ref. 1; BAC38817." evidence="13" ref="1">
    <original>E</original>
    <variation>G</variation>
    <location>
        <position position="472"/>
    </location>
</feature>
<feature type="sequence conflict" description="In Ref. 3; AAH75709." evidence="13" ref="3">
    <original>N</original>
    <variation>S</variation>
    <location>
        <position position="521"/>
    </location>
</feature>
<feature type="sequence conflict" description="In Ref. 1; BAC38817." evidence="13" ref="1">
    <original>P</original>
    <variation>H</variation>
    <location>
        <position position="590"/>
    </location>
</feature>
<feature type="sequence conflict" description="In Ref. 2; BAE31010." evidence="13" ref="2">
    <original>R</original>
    <variation>G</variation>
    <location>
        <position position="595"/>
    </location>
</feature>
<feature type="sequence conflict" description="In Ref. 3; AAH75709." evidence="13" ref="3">
    <original>H</original>
    <variation>Y</variation>
    <location>
        <position position="664"/>
    </location>
</feature>
<feature type="sequence conflict" description="In Ref. 3; AAH75709." evidence="13" ref="3">
    <original>A</original>
    <variation>T</variation>
    <location>
        <position position="678"/>
    </location>
</feature>
<feature type="helix" evidence="16">
    <location>
        <begin position="75"/>
        <end position="89"/>
    </location>
</feature>
<feature type="helix" evidence="16">
    <location>
        <begin position="91"/>
        <end position="94"/>
    </location>
</feature>
<feature type="helix" evidence="16">
    <location>
        <begin position="138"/>
        <end position="148"/>
    </location>
</feature>
<feature type="helix" evidence="16">
    <location>
        <begin position="151"/>
        <end position="158"/>
    </location>
</feature>
<feature type="helix" evidence="16">
    <location>
        <begin position="162"/>
        <end position="167"/>
    </location>
</feature>
<feature type="helix" evidence="16">
    <location>
        <begin position="173"/>
        <end position="187"/>
    </location>
</feature>
<feature type="helix" evidence="16">
    <location>
        <begin position="188"/>
        <end position="190"/>
    </location>
</feature>
<feature type="strand" evidence="16">
    <location>
        <begin position="196"/>
        <end position="201"/>
    </location>
</feature>
<feature type="strand" evidence="16">
    <location>
        <begin position="208"/>
        <end position="217"/>
    </location>
</feature>
<feature type="strand" evidence="16">
    <location>
        <begin position="224"/>
        <end position="235"/>
    </location>
</feature>
<feature type="helix" evidence="16">
    <location>
        <begin position="237"/>
        <end position="243"/>
    </location>
</feature>
<feature type="turn" evidence="16">
    <location>
        <begin position="246"/>
        <end position="248"/>
    </location>
</feature>
<feature type="strand" evidence="16">
    <location>
        <begin position="253"/>
        <end position="256"/>
    </location>
</feature>
<feature type="turn" evidence="16">
    <location>
        <begin position="257"/>
        <end position="260"/>
    </location>
</feature>
<feature type="strand" evidence="16">
    <location>
        <begin position="261"/>
        <end position="267"/>
    </location>
</feature>
<feature type="helix" evidence="16">
    <location>
        <begin position="268"/>
        <end position="271"/>
    </location>
</feature>
<feature type="strand" evidence="16">
    <location>
        <begin position="279"/>
        <end position="296"/>
    </location>
</feature>
<feature type="turn" evidence="16">
    <location>
        <begin position="310"/>
        <end position="313"/>
    </location>
</feature>
<feature type="helix" evidence="16">
    <location>
        <begin position="315"/>
        <end position="317"/>
    </location>
</feature>
<feature type="helix" evidence="16">
    <location>
        <begin position="323"/>
        <end position="328"/>
    </location>
</feature>
<feature type="helix" evidence="16">
    <location>
        <begin position="331"/>
        <end position="333"/>
    </location>
</feature>
<proteinExistence type="evidence at protein level"/>
<gene>
    <name evidence="14" type="primary">Kmt5b</name>
    <name type="synonym">Suv420h1</name>
</gene>
<name>KMT5B_MOUSE</name>
<reference key="1">
    <citation type="journal article" date="2004" name="Genes Dev.">
        <title>A silencing pathway to induce H3-K9 and H4-K20 trimethylation at constitutive heterochromatin.</title>
        <authorList>
            <person name="Schotta G."/>
            <person name="Lachner M."/>
            <person name="Sarma K."/>
            <person name="Ebert A."/>
            <person name="Sengupta R."/>
            <person name="Reuter G."/>
            <person name="Reinberg D."/>
            <person name="Jenuwein T."/>
        </authorList>
    </citation>
    <scope>NUCLEOTIDE SEQUENCE [MRNA] (ISOFORM 1)</scope>
    <scope>FUNCTION</scope>
    <scope>CATALYTIC ACTIVITY</scope>
    <scope>SUBCELLULAR LOCATION</scope>
    <scope>INTERACTION WITH CBX1; CBX3 AND CBX5</scope>
    <source>
        <strain>C57BL/6J</strain>
    </source>
</reference>
<reference key="2">
    <citation type="journal article" date="2005" name="Science">
        <title>The transcriptional landscape of the mammalian genome.</title>
        <authorList>
            <person name="Carninci P."/>
            <person name="Kasukawa T."/>
            <person name="Katayama S."/>
            <person name="Gough J."/>
            <person name="Frith M.C."/>
            <person name="Maeda N."/>
            <person name="Oyama R."/>
            <person name="Ravasi T."/>
            <person name="Lenhard B."/>
            <person name="Wells C."/>
            <person name="Kodzius R."/>
            <person name="Shimokawa K."/>
            <person name="Bajic V.B."/>
            <person name="Brenner S.E."/>
            <person name="Batalov S."/>
            <person name="Forrest A.R."/>
            <person name="Zavolan M."/>
            <person name="Davis M.J."/>
            <person name="Wilming L.G."/>
            <person name="Aidinis V."/>
            <person name="Allen J.E."/>
            <person name="Ambesi-Impiombato A."/>
            <person name="Apweiler R."/>
            <person name="Aturaliya R.N."/>
            <person name="Bailey T.L."/>
            <person name="Bansal M."/>
            <person name="Baxter L."/>
            <person name="Beisel K.W."/>
            <person name="Bersano T."/>
            <person name="Bono H."/>
            <person name="Chalk A.M."/>
            <person name="Chiu K.P."/>
            <person name="Choudhary V."/>
            <person name="Christoffels A."/>
            <person name="Clutterbuck D.R."/>
            <person name="Crowe M.L."/>
            <person name="Dalla E."/>
            <person name="Dalrymple B.P."/>
            <person name="de Bono B."/>
            <person name="Della Gatta G."/>
            <person name="di Bernardo D."/>
            <person name="Down T."/>
            <person name="Engstrom P."/>
            <person name="Fagiolini M."/>
            <person name="Faulkner G."/>
            <person name="Fletcher C.F."/>
            <person name="Fukushima T."/>
            <person name="Furuno M."/>
            <person name="Futaki S."/>
            <person name="Gariboldi M."/>
            <person name="Georgii-Hemming P."/>
            <person name="Gingeras T.R."/>
            <person name="Gojobori T."/>
            <person name="Green R.E."/>
            <person name="Gustincich S."/>
            <person name="Harbers M."/>
            <person name="Hayashi Y."/>
            <person name="Hensch T.K."/>
            <person name="Hirokawa N."/>
            <person name="Hill D."/>
            <person name="Huminiecki L."/>
            <person name="Iacono M."/>
            <person name="Ikeo K."/>
            <person name="Iwama A."/>
            <person name="Ishikawa T."/>
            <person name="Jakt M."/>
            <person name="Kanapin A."/>
            <person name="Katoh M."/>
            <person name="Kawasawa Y."/>
            <person name="Kelso J."/>
            <person name="Kitamura H."/>
            <person name="Kitano H."/>
            <person name="Kollias G."/>
            <person name="Krishnan S.P."/>
            <person name="Kruger A."/>
            <person name="Kummerfeld S.K."/>
            <person name="Kurochkin I.V."/>
            <person name="Lareau L.F."/>
            <person name="Lazarevic D."/>
            <person name="Lipovich L."/>
            <person name="Liu J."/>
            <person name="Liuni S."/>
            <person name="McWilliam S."/>
            <person name="Madan Babu M."/>
            <person name="Madera M."/>
            <person name="Marchionni L."/>
            <person name="Matsuda H."/>
            <person name="Matsuzawa S."/>
            <person name="Miki H."/>
            <person name="Mignone F."/>
            <person name="Miyake S."/>
            <person name="Morris K."/>
            <person name="Mottagui-Tabar S."/>
            <person name="Mulder N."/>
            <person name="Nakano N."/>
            <person name="Nakauchi H."/>
            <person name="Ng P."/>
            <person name="Nilsson R."/>
            <person name="Nishiguchi S."/>
            <person name="Nishikawa S."/>
            <person name="Nori F."/>
            <person name="Ohara O."/>
            <person name="Okazaki Y."/>
            <person name="Orlando V."/>
            <person name="Pang K.C."/>
            <person name="Pavan W.J."/>
            <person name="Pavesi G."/>
            <person name="Pesole G."/>
            <person name="Petrovsky N."/>
            <person name="Piazza S."/>
            <person name="Reed J."/>
            <person name="Reid J.F."/>
            <person name="Ring B.Z."/>
            <person name="Ringwald M."/>
            <person name="Rost B."/>
            <person name="Ruan Y."/>
            <person name="Salzberg S.L."/>
            <person name="Sandelin A."/>
            <person name="Schneider C."/>
            <person name="Schoenbach C."/>
            <person name="Sekiguchi K."/>
            <person name="Semple C.A."/>
            <person name="Seno S."/>
            <person name="Sessa L."/>
            <person name="Sheng Y."/>
            <person name="Shibata Y."/>
            <person name="Shimada H."/>
            <person name="Shimada K."/>
            <person name="Silva D."/>
            <person name="Sinclair B."/>
            <person name="Sperling S."/>
            <person name="Stupka E."/>
            <person name="Sugiura K."/>
            <person name="Sultana R."/>
            <person name="Takenaka Y."/>
            <person name="Taki K."/>
            <person name="Tammoja K."/>
            <person name="Tan S.L."/>
            <person name="Tang S."/>
            <person name="Taylor M.S."/>
            <person name="Tegner J."/>
            <person name="Teichmann S.A."/>
            <person name="Ueda H.R."/>
            <person name="van Nimwegen E."/>
            <person name="Verardo R."/>
            <person name="Wei C.L."/>
            <person name="Yagi K."/>
            <person name="Yamanishi H."/>
            <person name="Zabarovsky E."/>
            <person name="Zhu S."/>
            <person name="Zimmer A."/>
            <person name="Hide W."/>
            <person name="Bult C."/>
            <person name="Grimmond S.M."/>
            <person name="Teasdale R.D."/>
            <person name="Liu E.T."/>
            <person name="Brusic V."/>
            <person name="Quackenbush J."/>
            <person name="Wahlestedt C."/>
            <person name="Mattick J.S."/>
            <person name="Hume D.A."/>
            <person name="Kai C."/>
            <person name="Sasaki D."/>
            <person name="Tomaru Y."/>
            <person name="Fukuda S."/>
            <person name="Kanamori-Katayama M."/>
            <person name="Suzuki M."/>
            <person name="Aoki J."/>
            <person name="Arakawa T."/>
            <person name="Iida J."/>
            <person name="Imamura K."/>
            <person name="Itoh M."/>
            <person name="Kato T."/>
            <person name="Kawaji H."/>
            <person name="Kawagashira N."/>
            <person name="Kawashima T."/>
            <person name="Kojima M."/>
            <person name="Kondo S."/>
            <person name="Konno H."/>
            <person name="Nakano K."/>
            <person name="Ninomiya N."/>
            <person name="Nishio T."/>
            <person name="Okada M."/>
            <person name="Plessy C."/>
            <person name="Shibata K."/>
            <person name="Shiraki T."/>
            <person name="Suzuki S."/>
            <person name="Tagami M."/>
            <person name="Waki K."/>
            <person name="Watahiki A."/>
            <person name="Okamura-Oho Y."/>
            <person name="Suzuki H."/>
            <person name="Kawai J."/>
            <person name="Hayashizaki Y."/>
        </authorList>
    </citation>
    <scope>NUCLEOTIDE SEQUENCE [LARGE SCALE MRNA] (ISOFORMS 1; 2; 3 AND 4)</scope>
    <source>
        <strain>C57BL/6J</strain>
        <tissue>Bone marrow</tissue>
        <tissue>Cerebellum</tissue>
        <tissue>Hippocampus</tissue>
        <tissue>Lung</tissue>
        <tissue>Oviduct</tissue>
        <tissue>Vagina</tissue>
    </source>
</reference>
<reference key="3">
    <citation type="journal article" date="2004" name="Genome Res.">
        <title>The status, quality, and expansion of the NIH full-length cDNA project: the Mammalian Gene Collection (MGC).</title>
        <authorList>
            <consortium name="The MGC Project Team"/>
        </authorList>
    </citation>
    <scope>NUCLEOTIDE SEQUENCE [LARGE SCALE MRNA] (ISOFORMS 4 AND 5)</scope>
    <source>
        <strain>Czech II</strain>
        <strain>FVB/N</strain>
        <tissue>Mammary tumor</tissue>
        <tissue>Salivary gland</tissue>
    </source>
</reference>
<reference key="4">
    <citation type="journal article" date="2005" name="Nat. Cell Biol.">
        <title>Role of the RB1 family in stabilizing histone methylation at constitutive heterochromatin.</title>
        <authorList>
            <person name="Gonzalo S."/>
            <person name="Garcia-Cao M."/>
            <person name="Fraga M.F."/>
            <person name="Schotta G."/>
            <person name="Peters A.H.F.M."/>
            <person name="Cotter S.E."/>
            <person name="Eguia R."/>
            <person name="Dean D.C."/>
            <person name="Esteller M."/>
            <person name="Jenuwein T."/>
            <person name="Blasco M.A."/>
        </authorList>
    </citation>
    <scope>INTERACTION WITH RB1; RBL1 AND RBL2</scope>
</reference>
<reference key="5">
    <citation type="journal article" date="2006" name="Mol. Cell. Biol.">
        <title>The retinoblastoma protein regulates pericentric heterochromatin.</title>
        <authorList>
            <person name="Isaac C.E."/>
            <person name="Francis S.M."/>
            <person name="Martens A.L."/>
            <person name="Julian L.M."/>
            <person name="Seifried L.A."/>
            <person name="Erdmann N."/>
            <person name="Binne U.K."/>
            <person name="Harrington L."/>
            <person name="Sicinski P."/>
            <person name="Berube N.G."/>
            <person name="Dyson N.J."/>
            <person name="Dick F.A."/>
        </authorList>
    </citation>
    <scope>INTERACTION WITH RB1; RBL1 AND RBL2</scope>
</reference>
<reference key="6">
    <citation type="journal article" date="2013" name="J. Mol. Cell Biol.">
        <title>FSHD muscular dystrophy region gene 1 binds Suv4-20h1 histone methyltransferase and impairs myogenesis.</title>
        <authorList>
            <person name="Neguembor M.V."/>
            <person name="Xynos A."/>
            <person name="Onorati M.C."/>
            <person name="Caccia R."/>
            <person name="Bortolanza S."/>
            <person name="Godio C."/>
            <person name="Pistoni M."/>
            <person name="Corona D.F."/>
            <person name="Schotta G."/>
            <person name="Gabellini D."/>
        </authorList>
    </citation>
    <scope>FUNCTION</scope>
    <scope>INTERACTION WITH FRG1</scope>
    <scope>DISRUPTION PHENOTYPE</scope>
</reference>
<reference key="7">
    <citation type="journal article" date="2017" name="Nat. Chem. Biol.">
        <title>The SUV4-20 inhibitor A-196 verifies a role for epigenetics in genomic integrity.</title>
        <authorList>
            <person name="Bromberg K.D."/>
            <person name="Mitchell T.R."/>
            <person name="Upadhyay A.K."/>
            <person name="Jakob C.G."/>
            <person name="Jhala M.A."/>
            <person name="Comess K.M."/>
            <person name="Lasko L.M."/>
            <person name="Li C."/>
            <person name="Tuzon C.T."/>
            <person name="Dai Y."/>
            <person name="Li F."/>
            <person name="Eram M.S."/>
            <person name="Nuber A."/>
            <person name="Soni N.B."/>
            <person name="Manaves V."/>
            <person name="Algire M.A."/>
            <person name="Sweis R.F."/>
            <person name="Torrent M."/>
            <person name="Schotta G."/>
            <person name="Sun C."/>
            <person name="Michaelides M.R."/>
            <person name="Shoemaker A.R."/>
            <person name="Arrowsmith C.H."/>
            <person name="Brown P.J."/>
            <person name="Santhakumar V."/>
            <person name="Martin A."/>
            <person name="Rice J.C."/>
            <person name="Chiang G.G."/>
            <person name="Vedadi M."/>
            <person name="Barsyte-Lovejoy D."/>
            <person name="Pappano W.N."/>
        </authorList>
    </citation>
    <scope>FUNCTION</scope>
    <scope>CATALYTIC ACTIVITY</scope>
</reference>
<reference evidence="15" key="8">
    <citation type="journal article" date="2014" name="Nucleic Acids Res.">
        <title>A novel route to product specificity in the Suv4-20 family of histone H4K20 methyltransferases.</title>
        <authorList>
            <person name="Southall S.M."/>
            <person name="Cronin N.B."/>
            <person name="Wilson J.R."/>
        </authorList>
    </citation>
    <scope>X-RAY CRYSTALLOGRAPHY (2.17 ANGSTROMS) OF 70-336 IN COMPLEX WITH S-ADENOSYL-L-METHIONINE AND ZINC</scope>
    <scope>SUBUNIT</scope>
    <scope>CATALYTIC ACTIVITY</scope>
    <scope>FUNCTION</scope>
    <scope>BIOPHYSICOCHEMICAL PROPERTIES</scope>
    <scope>MUTAGENESIS OF PHE-282</scope>
</reference>
<comment type="function">
    <text evidence="1 5 6 7 8 9 10">Histone methyltransferase that specifically methylates monomethylated 'Lys-20' (H4K20me1) and dimethylated 'Lys-20' (H4K20me2) of histone H4 to produce respectively dimethylated 'Lys-20' (H4K20me2) and trimethylated 'Lys-20' (H4K20me3) and thus regulates transcription and maintenance of genome integrity (PubMed:15145825, PubMed:24049080, PubMed:28114273). In vitro also methylates unmodified 'Lys-20' (H4K20me0) of histone H4 and nucleosomes (By similarity). H4 'Lys-20' trimethylation represents a specific tag for epigenetic transcriptional repression (PubMed:15145825). Mainly functions in pericentric heterochromatin regions, thereby playing a central role in the establishment of constitutive heterochromatin in these regions (PubMed:15145825). KMT5B is targeted to histone H3 via its interaction with RB1 family proteins (RB1, RBL1 and RBL2) (PubMed:15750587, PubMed:16612004). Plays a role in myogenesis by regulating the expression of target genes, such as EID3 (PubMed:23720823). Facilitates TP53BP1 foci formation upon DNA damage and proficient non-homologous end-joining (NHEJ)-directed DNA repair by catalyzing the di- and trimethylation of 'Lys-20' of histone H4 (By similarity). May play a role in class switch reconbination by catalyzing the di- and trimethylation of 'Lys-20' of histone H4 (PubMed:28114273).</text>
</comment>
<comment type="catalytic activity">
    <reaction evidence="5 9 10">
        <text>N(6)-methyl-L-lysyl(20)-[histone H4] + S-adenosyl-L-methionine = N(6),N(6)-dimethyl-L-lysyl(20)-[histone H4] + S-adenosyl-L-homocysteine + H(+)</text>
        <dbReference type="Rhea" id="RHEA:60348"/>
        <dbReference type="Rhea" id="RHEA-COMP:15555"/>
        <dbReference type="Rhea" id="RHEA-COMP:15556"/>
        <dbReference type="ChEBI" id="CHEBI:15378"/>
        <dbReference type="ChEBI" id="CHEBI:57856"/>
        <dbReference type="ChEBI" id="CHEBI:59789"/>
        <dbReference type="ChEBI" id="CHEBI:61929"/>
        <dbReference type="ChEBI" id="CHEBI:61976"/>
        <dbReference type="EC" id="2.1.1.362"/>
    </reaction>
    <physiologicalReaction direction="left-to-right" evidence="10">
        <dbReference type="Rhea" id="RHEA:60349"/>
    </physiologicalReaction>
</comment>
<comment type="catalytic activity">
    <reaction evidence="5 10">
        <text>N(6),N(6)-dimethyl-L-lysyl(20)-[histone H4] + S-adenosyl-L-methionine = N(6),N(6),N(6)-trimethyl-L-lysyl(20)-[histone H4] + S-adenosyl-L-homocysteine + H(+)</text>
        <dbReference type="Rhea" id="RHEA:61992"/>
        <dbReference type="Rhea" id="RHEA-COMP:15556"/>
        <dbReference type="Rhea" id="RHEA-COMP:15998"/>
        <dbReference type="ChEBI" id="CHEBI:15378"/>
        <dbReference type="ChEBI" id="CHEBI:57856"/>
        <dbReference type="ChEBI" id="CHEBI:59789"/>
        <dbReference type="ChEBI" id="CHEBI:61961"/>
        <dbReference type="ChEBI" id="CHEBI:61976"/>
    </reaction>
    <physiologicalReaction direction="left-to-right" evidence="10">
        <dbReference type="Rhea" id="RHEA:61993"/>
    </physiologicalReaction>
</comment>
<comment type="catalytic activity">
    <reaction evidence="1">
        <text>L-lysyl(20)-[histone H4] + S-adenosyl-L-methionine = N(6)-methyl-L-lysyl(20)-[histone H4] + S-adenosyl-L-homocysteine + H(+)</text>
        <dbReference type="Rhea" id="RHEA:60344"/>
        <dbReference type="Rhea" id="RHEA-COMP:15554"/>
        <dbReference type="Rhea" id="RHEA-COMP:15555"/>
        <dbReference type="ChEBI" id="CHEBI:15378"/>
        <dbReference type="ChEBI" id="CHEBI:29969"/>
        <dbReference type="ChEBI" id="CHEBI:57856"/>
        <dbReference type="ChEBI" id="CHEBI:59789"/>
        <dbReference type="ChEBI" id="CHEBI:61929"/>
        <dbReference type="EC" id="2.1.1.361"/>
    </reaction>
    <physiologicalReaction direction="left-to-right" evidence="1">
        <dbReference type="Rhea" id="RHEA:60345"/>
    </physiologicalReaction>
</comment>
<comment type="activity regulation">
    <text evidence="1">Inhibited by 6,7-Dichloro-N-cyclopentyl-4-(pyridin-4-yl)phthalazin-1-amine (A-196). A-196 is competitive with the histone peptide substrate H4K20me1 but non competitive with S-adenosyl-L-methionine.</text>
</comment>
<comment type="biophysicochemical properties">
    <kinetics>
        <KM evidence="9">46 uM for histone H4K20me1 peptide</KM>
    </kinetics>
</comment>
<comment type="subunit">
    <text evidence="5 6 7 8 9">Homodimer (PubMed:24049080). Interacts with HP1 proteins CBX1, CBX3 and CBX5 (PubMed:15145825). Interacts with RB1 family proteins RB1, RBL1 and RBL2 (PubMed:15750587, PubMed:16612004). Interacts (via C-terminus) with FRG1 (PubMed:23720823).</text>
</comment>
<comment type="subcellular location">
    <subcellularLocation>
        <location evidence="5">Nucleus</location>
    </subcellularLocation>
    <subcellularLocation>
        <location evidence="5">Chromosome</location>
    </subcellularLocation>
    <text>Associated with pericentric heterochromatin. CBX1 and CBX5 are required for the localization to pericentric heterochromatin.</text>
</comment>
<comment type="alternative products">
    <event type="alternative splicing"/>
    <isoform>
        <id>Q3U8K7-1</id>
        <name>1</name>
        <sequence type="displayed"/>
    </isoform>
    <isoform>
        <id>Q3U8K7-2</id>
        <name>2</name>
        <sequence type="described" ref="VSP_024055 VSP_024056"/>
    </isoform>
    <isoform>
        <id>Q3U8K7-3</id>
        <name>3</name>
        <sequence type="described" ref="VSP_024053"/>
    </isoform>
    <isoform>
        <id>Q3U8K7-4</id>
        <name>4</name>
        <sequence type="described" ref="VSP_024054"/>
    </isoform>
    <isoform>
        <id>Q3U8K7-5</id>
        <name>5</name>
        <sequence type="described" ref="VSP_024053 VSP_024057"/>
    </isoform>
</comment>
<comment type="disruption phenotype">
    <text evidence="8">Partial muscle-specific knockout mice display several signs of muscular dystrophy including necrosis and an increased number of centrally nucleated myofibers. RNAi-mediated knockdown in C2C12 muscle cells causes reduced myogenic differentiation of the cells.</text>
</comment>
<comment type="similarity">
    <text evidence="3">Belongs to the class V-like SAM-binding methyltransferase superfamily. Histone-lysine methyltransferase family. Suvar4-20 subfamily.</text>
</comment>
<comment type="sequence caution" evidence="13">
    <conflict type="erroneous initiation">
        <sequence resource="EMBL-CDS" id="AAH11214"/>
    </conflict>
</comment>
<comment type="sequence caution" evidence="13">
    <conflict type="erroneous initiation">
        <sequence resource="EMBL-CDS" id="AAT00539"/>
    </conflict>
</comment>
<comment type="sequence caution" evidence="13">
    <conflict type="erroneous initiation">
        <sequence resource="EMBL-CDS" id="BAC39834"/>
    </conflict>
</comment>
<comment type="sequence caution" evidence="13">
    <conflict type="erroneous termination">
        <sequence resource="EMBL-CDS" id="BAE23934"/>
    </conflict>
    <text>Truncated C-terminus.</text>
</comment>
<evidence type="ECO:0000250" key="1">
    <source>
        <dbReference type="UniProtKB" id="Q4FZB7"/>
    </source>
</evidence>
<evidence type="ECO:0000255" key="2">
    <source>
        <dbReference type="PROSITE-ProRule" id="PRU00190"/>
    </source>
</evidence>
<evidence type="ECO:0000255" key="3">
    <source>
        <dbReference type="PROSITE-ProRule" id="PRU00903"/>
    </source>
</evidence>
<evidence type="ECO:0000256" key="4">
    <source>
        <dbReference type="SAM" id="MobiDB-lite"/>
    </source>
</evidence>
<evidence type="ECO:0000269" key="5">
    <source>
    </source>
</evidence>
<evidence type="ECO:0000269" key="6">
    <source>
    </source>
</evidence>
<evidence type="ECO:0000269" key="7">
    <source>
    </source>
</evidence>
<evidence type="ECO:0000269" key="8">
    <source>
    </source>
</evidence>
<evidence type="ECO:0000269" key="9">
    <source>
    </source>
</evidence>
<evidence type="ECO:0000269" key="10">
    <source>
    </source>
</evidence>
<evidence type="ECO:0000303" key="11">
    <source>
    </source>
</evidence>
<evidence type="ECO:0000303" key="12">
    <source>
    </source>
</evidence>
<evidence type="ECO:0000305" key="13"/>
<evidence type="ECO:0000312" key="14">
    <source>
        <dbReference type="MGI" id="MGI:2444557"/>
    </source>
</evidence>
<evidence type="ECO:0007744" key="15">
    <source>
        <dbReference type="PDB" id="4BUP"/>
    </source>
</evidence>
<evidence type="ECO:0007829" key="16">
    <source>
        <dbReference type="PDB" id="4BUP"/>
    </source>
</evidence>
<organism>
    <name type="scientific">Mus musculus</name>
    <name type="common">Mouse</name>
    <dbReference type="NCBI Taxonomy" id="10090"/>
    <lineage>
        <taxon>Eukaryota</taxon>
        <taxon>Metazoa</taxon>
        <taxon>Chordata</taxon>
        <taxon>Craniata</taxon>
        <taxon>Vertebrata</taxon>
        <taxon>Euteleostomi</taxon>
        <taxon>Mammalia</taxon>
        <taxon>Eutheria</taxon>
        <taxon>Euarchontoglires</taxon>
        <taxon>Glires</taxon>
        <taxon>Rodentia</taxon>
        <taxon>Myomorpha</taxon>
        <taxon>Muroidea</taxon>
        <taxon>Muridae</taxon>
        <taxon>Murinae</taxon>
        <taxon>Mus</taxon>
        <taxon>Mus</taxon>
    </lineage>
</organism>
<accession>Q3U8K7</accession>
<accession>Q3UTP6</accession>
<accession>Q6DI74</accession>
<accession>Q6Q784</accession>
<accession>Q8BU67</accession>
<accession>Q8BUN0</accession>
<accession>Q8BUT7</accession>
<accession>Q8BW73</accession>
<accession>Q8BZ24</accession>
<accession>Q91X81</accession>
<keyword id="KW-0002">3D-structure</keyword>
<keyword id="KW-0025">Alternative splicing</keyword>
<keyword id="KW-0156">Chromatin regulator</keyword>
<keyword id="KW-0158">Chromosome</keyword>
<keyword id="KW-1017">Isopeptide bond</keyword>
<keyword id="KW-0479">Metal-binding</keyword>
<keyword id="KW-0489">Methyltransferase</keyword>
<keyword id="KW-0517">Myogenesis</keyword>
<keyword id="KW-0539">Nucleus</keyword>
<keyword id="KW-1185">Reference proteome</keyword>
<keyword id="KW-0678">Repressor</keyword>
<keyword id="KW-0949">S-adenosyl-L-methionine</keyword>
<keyword id="KW-0804">Transcription</keyword>
<keyword id="KW-0805">Transcription regulation</keyword>
<keyword id="KW-0808">Transferase</keyword>
<keyword id="KW-0832">Ubl conjugation</keyword>
<keyword id="KW-0862">Zinc</keyword>
<dbReference type="EC" id="2.1.1.362" evidence="5 9 10"/>
<dbReference type="EC" id="2.1.1.361" evidence="1"/>
<dbReference type="EMBL" id="AY555192">
    <property type="protein sequence ID" value="AAT00539.1"/>
    <property type="status" value="ALT_INIT"/>
    <property type="molecule type" value="mRNA"/>
</dbReference>
<dbReference type="EMBL" id="AK036880">
    <property type="protein sequence ID" value="BAC29617.1"/>
    <property type="molecule type" value="mRNA"/>
</dbReference>
<dbReference type="EMBL" id="AK054093">
    <property type="protein sequence ID" value="BAC35652.1"/>
    <property type="molecule type" value="mRNA"/>
</dbReference>
<dbReference type="EMBL" id="AK082660">
    <property type="protein sequence ID" value="BAC38565.1"/>
    <property type="molecule type" value="mRNA"/>
</dbReference>
<dbReference type="EMBL" id="AK083227">
    <property type="protein sequence ID" value="BAC38817.1"/>
    <property type="molecule type" value="mRNA"/>
</dbReference>
<dbReference type="EMBL" id="AK087267">
    <property type="protein sequence ID" value="BAC39834.1"/>
    <property type="status" value="ALT_INIT"/>
    <property type="molecule type" value="mRNA"/>
</dbReference>
<dbReference type="EMBL" id="AK139255">
    <property type="protein sequence ID" value="BAE23934.1"/>
    <property type="status" value="ALT_SEQ"/>
    <property type="molecule type" value="mRNA"/>
</dbReference>
<dbReference type="EMBL" id="AK152179">
    <property type="protein sequence ID" value="BAE31010.1"/>
    <property type="molecule type" value="mRNA"/>
</dbReference>
<dbReference type="EMBL" id="BC011214">
    <property type="protein sequence ID" value="AAH11214.1"/>
    <property type="status" value="ALT_INIT"/>
    <property type="molecule type" value="mRNA"/>
</dbReference>
<dbReference type="EMBL" id="BC075709">
    <property type="protein sequence ID" value="AAH75709.1"/>
    <property type="molecule type" value="mRNA"/>
</dbReference>
<dbReference type="CCDS" id="CCDS29399.1">
    <molecule id="Q3U8K7-3"/>
</dbReference>
<dbReference type="CCDS" id="CCDS50343.1">
    <molecule id="Q3U8K7-1"/>
</dbReference>
<dbReference type="CCDS" id="CCDS50344.1">
    <molecule id="Q3U8K7-2"/>
</dbReference>
<dbReference type="CCDS" id="CCDS50345.1">
    <molecule id="Q3U8K7-4"/>
</dbReference>
<dbReference type="RefSeq" id="NP_001161356.1">
    <molecule id="Q3U8K7-4"/>
    <property type="nucleotide sequence ID" value="NM_001167884.1"/>
</dbReference>
<dbReference type="RefSeq" id="NP_001161357.1">
    <molecule id="Q3U8K7-1"/>
    <property type="nucleotide sequence ID" value="NM_001167885.1"/>
</dbReference>
<dbReference type="RefSeq" id="NP_001161358.1">
    <molecule id="Q3U8K7-3"/>
    <property type="nucleotide sequence ID" value="NM_001167886.1"/>
</dbReference>
<dbReference type="RefSeq" id="NP_001161359.1">
    <molecule id="Q3U8K7-1"/>
    <property type="nucleotide sequence ID" value="NM_001167887.1"/>
</dbReference>
<dbReference type="RefSeq" id="NP_001161360.1">
    <molecule id="Q3U8K7-4"/>
    <property type="nucleotide sequence ID" value="NM_001167888.1"/>
</dbReference>
<dbReference type="RefSeq" id="NP_001161361.1">
    <molecule id="Q3U8K7-2"/>
    <property type="nucleotide sequence ID" value="NM_001167889.2"/>
</dbReference>
<dbReference type="RefSeq" id="NP_001366607.1">
    <molecule id="Q3U8K7-1"/>
    <property type="nucleotide sequence ID" value="NM_001379678.1"/>
</dbReference>
<dbReference type="RefSeq" id="NP_001366608.1">
    <molecule id="Q3U8K7-3"/>
    <property type="nucleotide sequence ID" value="NM_001379679.1"/>
</dbReference>
<dbReference type="RefSeq" id="NP_659120.3">
    <molecule id="Q3U8K7-3"/>
    <property type="nucleotide sequence ID" value="NM_144871.4"/>
</dbReference>
<dbReference type="RefSeq" id="XP_006531790.1">
    <molecule id="Q3U8K7-1"/>
    <property type="nucleotide sequence ID" value="XM_006531727.5"/>
</dbReference>
<dbReference type="RefSeq" id="XP_006531791.1">
    <molecule id="Q3U8K7-1"/>
    <property type="nucleotide sequence ID" value="XM_006531728.5"/>
</dbReference>
<dbReference type="RefSeq" id="XP_006531794.1">
    <property type="nucleotide sequence ID" value="XM_006531731.2"/>
</dbReference>
<dbReference type="RefSeq" id="XP_011246925.1">
    <property type="nucleotide sequence ID" value="XM_011248623.2"/>
</dbReference>
<dbReference type="RefSeq" id="XP_011246926.1">
    <molecule id="Q3U8K7-3"/>
    <property type="nucleotide sequence ID" value="XM_011248624.3"/>
</dbReference>
<dbReference type="RefSeq" id="XP_017173632.1">
    <property type="nucleotide sequence ID" value="XM_017318143.1"/>
</dbReference>
<dbReference type="RefSeq" id="XP_036017420.1">
    <molecule id="Q3U8K7-1"/>
    <property type="nucleotide sequence ID" value="XM_036161527.1"/>
</dbReference>
<dbReference type="RefSeq" id="XP_036017421.1">
    <molecule id="Q3U8K7-1"/>
    <property type="nucleotide sequence ID" value="XM_036161528.1"/>
</dbReference>
<dbReference type="RefSeq" id="XP_036017424.1">
    <molecule id="Q3U8K7-5"/>
    <property type="nucleotide sequence ID" value="XM_036161531.1"/>
</dbReference>
<dbReference type="PDB" id="4BUP">
    <property type="method" value="X-ray"/>
    <property type="resolution" value="2.17 A"/>
    <property type="chains" value="A/B=70-336"/>
</dbReference>
<dbReference type="PDBsum" id="4BUP"/>
<dbReference type="SMR" id="Q3U8K7"/>
<dbReference type="BioGRID" id="230441">
    <property type="interactions" value="17"/>
</dbReference>
<dbReference type="FunCoup" id="Q3U8K7">
    <property type="interactions" value="4030"/>
</dbReference>
<dbReference type="STRING" id="10090.ENSMUSP00000109606"/>
<dbReference type="iPTMnet" id="Q3U8K7"/>
<dbReference type="PhosphoSitePlus" id="Q3U8K7"/>
<dbReference type="jPOST" id="Q3U8K7"/>
<dbReference type="PaxDb" id="10090-ENSMUSP00000109605"/>
<dbReference type="PeptideAtlas" id="Q3U8K7"/>
<dbReference type="ProteomicsDB" id="263668">
    <molecule id="Q3U8K7-1"/>
</dbReference>
<dbReference type="ProteomicsDB" id="263669">
    <molecule id="Q3U8K7-2"/>
</dbReference>
<dbReference type="ProteomicsDB" id="263670">
    <molecule id="Q3U8K7-3"/>
</dbReference>
<dbReference type="ProteomicsDB" id="263671">
    <molecule id="Q3U8K7-4"/>
</dbReference>
<dbReference type="ProteomicsDB" id="263672">
    <molecule id="Q3U8K7-5"/>
</dbReference>
<dbReference type="Antibodypedia" id="30535">
    <property type="antibodies" value="251 antibodies from 22 providers"/>
</dbReference>
<dbReference type="DNASU" id="225888"/>
<dbReference type="Ensembl" id="ENSMUST00000005518.16">
    <molecule id="Q3U8K7-4"/>
    <property type="protein sequence ID" value="ENSMUSP00000005518.10"/>
    <property type="gene ID" value="ENSMUSG00000045098.20"/>
</dbReference>
<dbReference type="Ensembl" id="ENSMUST00000052699.13">
    <molecule id="Q3U8K7-2"/>
    <property type="protein sequence ID" value="ENSMUSP00000060162.7"/>
    <property type="gene ID" value="ENSMUSG00000045098.20"/>
</dbReference>
<dbReference type="Ensembl" id="ENSMUST00000113968.9">
    <molecule id="Q3U8K7-4"/>
    <property type="protein sequence ID" value="ENSMUSP00000109601.3"/>
    <property type="gene ID" value="ENSMUSG00000045098.20"/>
</dbReference>
<dbReference type="Ensembl" id="ENSMUST00000113970.8">
    <molecule id="Q3U8K7-2"/>
    <property type="protein sequence ID" value="ENSMUSP00000109603.2"/>
    <property type="gene ID" value="ENSMUSG00000045098.20"/>
</dbReference>
<dbReference type="Ensembl" id="ENSMUST00000113972.9">
    <molecule id="Q3U8K7-1"/>
    <property type="protein sequence ID" value="ENSMUSP00000109605.3"/>
    <property type="gene ID" value="ENSMUSG00000045098.20"/>
</dbReference>
<dbReference type="Ensembl" id="ENSMUST00000113973.8">
    <molecule id="Q3U8K7-1"/>
    <property type="protein sequence ID" value="ENSMUSP00000109606.2"/>
    <property type="gene ID" value="ENSMUSG00000045098.20"/>
</dbReference>
<dbReference type="Ensembl" id="ENSMUST00000113974.11">
    <molecule id="Q3U8K7-3"/>
    <property type="protein sequence ID" value="ENSMUSP00000109607.5"/>
    <property type="gene ID" value="ENSMUSG00000045098.20"/>
</dbReference>
<dbReference type="Ensembl" id="ENSMUST00000113977.9">
    <molecule id="Q3U8K7-3"/>
    <property type="protein sequence ID" value="ENSMUSP00000109610.3"/>
    <property type="gene ID" value="ENSMUSG00000045098.20"/>
</dbReference>
<dbReference type="Ensembl" id="ENSMUST00000176262.8">
    <molecule id="Q3U8K7-3"/>
    <property type="protein sequence ID" value="ENSMUSP00000135563.2"/>
    <property type="gene ID" value="ENSMUSG00000045098.20"/>
</dbReference>
<dbReference type="Ensembl" id="ENSMUST00000237440.2">
    <molecule id="Q3U8K7-4"/>
    <property type="protein sequence ID" value="ENSMUSP00000158061.2"/>
    <property type="gene ID" value="ENSMUSG00000045098.20"/>
</dbReference>
<dbReference type="GeneID" id="225888"/>
<dbReference type="KEGG" id="mmu:225888"/>
<dbReference type="UCSC" id="uc008fww.2">
    <molecule id="Q3U8K7-4"/>
    <property type="organism name" value="mouse"/>
</dbReference>
<dbReference type="UCSC" id="uc008fwz.2">
    <molecule id="Q3U8K7-2"/>
    <property type="organism name" value="mouse"/>
</dbReference>
<dbReference type="UCSC" id="uc008fxa.2">
    <molecule id="Q3U8K7-1"/>
    <property type="organism name" value="mouse"/>
</dbReference>
<dbReference type="UCSC" id="uc008fxc.2">
    <molecule id="Q3U8K7-3"/>
    <property type="organism name" value="mouse"/>
</dbReference>
<dbReference type="AGR" id="MGI:2444557"/>
<dbReference type="CTD" id="51111"/>
<dbReference type="MGI" id="MGI:2444557">
    <property type="gene designation" value="Kmt5b"/>
</dbReference>
<dbReference type="VEuPathDB" id="HostDB:ENSMUSG00000045098"/>
<dbReference type="eggNOG" id="KOG2589">
    <property type="taxonomic scope" value="Eukaryota"/>
</dbReference>
<dbReference type="GeneTree" id="ENSGT00940000156431"/>
<dbReference type="HOGENOM" id="CLU_328991_0_0_1"/>
<dbReference type="InParanoid" id="Q3U8K7"/>
<dbReference type="OMA" id="NDHAQTK"/>
<dbReference type="OrthoDB" id="6627536at2759"/>
<dbReference type="PhylomeDB" id="Q3U8K7"/>
<dbReference type="TreeFam" id="TF106433"/>
<dbReference type="Reactome" id="R-MMU-3214841">
    <property type="pathway name" value="PKMTs methylate histone lysines"/>
</dbReference>
<dbReference type="BioGRID-ORCS" id="225888">
    <property type="hits" value="5 hits in 82 CRISPR screens"/>
</dbReference>
<dbReference type="ChiTaRS" id="Suv420h1">
    <property type="organism name" value="mouse"/>
</dbReference>
<dbReference type="EvolutionaryTrace" id="Q3U8K7"/>
<dbReference type="PRO" id="PR:Q3U8K7"/>
<dbReference type="Proteomes" id="UP000000589">
    <property type="component" value="Chromosome 19"/>
</dbReference>
<dbReference type="RNAct" id="Q3U8K7">
    <property type="molecule type" value="protein"/>
</dbReference>
<dbReference type="Bgee" id="ENSMUSG00000045098">
    <property type="expression patterns" value="Expressed in embryonic post-anal tail and 259 other cell types or tissues"/>
</dbReference>
<dbReference type="ExpressionAtlas" id="Q3U8K7">
    <property type="expression patterns" value="baseline and differential"/>
</dbReference>
<dbReference type="GO" id="GO:0005813">
    <property type="term" value="C:centrosome"/>
    <property type="evidence" value="ECO:0007669"/>
    <property type="project" value="Ensembl"/>
</dbReference>
<dbReference type="GO" id="GO:0036064">
    <property type="term" value="C:ciliary basal body"/>
    <property type="evidence" value="ECO:0007669"/>
    <property type="project" value="Ensembl"/>
</dbReference>
<dbReference type="GO" id="GO:0000779">
    <property type="term" value="C:condensed chromosome, centromeric region"/>
    <property type="evidence" value="ECO:0000314"/>
    <property type="project" value="MGI"/>
</dbReference>
<dbReference type="GO" id="GO:0036464">
    <property type="term" value="C:cytoplasmic ribonucleoprotein granule"/>
    <property type="evidence" value="ECO:0007669"/>
    <property type="project" value="Ensembl"/>
</dbReference>
<dbReference type="GO" id="GO:0001650">
    <property type="term" value="C:fibrillar center"/>
    <property type="evidence" value="ECO:0007669"/>
    <property type="project" value="Ensembl"/>
</dbReference>
<dbReference type="GO" id="GO:0045171">
    <property type="term" value="C:intercellular bridge"/>
    <property type="evidence" value="ECO:0007669"/>
    <property type="project" value="Ensembl"/>
</dbReference>
<dbReference type="GO" id="GO:0072686">
    <property type="term" value="C:mitotic spindle"/>
    <property type="evidence" value="ECO:0007669"/>
    <property type="project" value="Ensembl"/>
</dbReference>
<dbReference type="GO" id="GO:0005654">
    <property type="term" value="C:nucleoplasm"/>
    <property type="evidence" value="ECO:0007669"/>
    <property type="project" value="Ensembl"/>
</dbReference>
<dbReference type="GO" id="GO:0005886">
    <property type="term" value="C:plasma membrane"/>
    <property type="evidence" value="ECO:0007669"/>
    <property type="project" value="Ensembl"/>
</dbReference>
<dbReference type="GO" id="GO:0003682">
    <property type="term" value="F:chromatin binding"/>
    <property type="evidence" value="ECO:0000250"/>
    <property type="project" value="UniProtKB"/>
</dbReference>
<dbReference type="GO" id="GO:0042799">
    <property type="term" value="F:histone H4K20 methyltransferase activity"/>
    <property type="evidence" value="ECO:0000314"/>
    <property type="project" value="UniProtKB"/>
</dbReference>
<dbReference type="GO" id="GO:0140944">
    <property type="term" value="F:histone H4K20 monomethyltransferase activity"/>
    <property type="evidence" value="ECO:0007669"/>
    <property type="project" value="UniProtKB-EC"/>
</dbReference>
<dbReference type="GO" id="GO:0140941">
    <property type="term" value="F:histone H4K20me methyltransferase activity"/>
    <property type="evidence" value="ECO:0007669"/>
    <property type="project" value="UniProtKB-EC"/>
</dbReference>
<dbReference type="GO" id="GO:0046872">
    <property type="term" value="F:metal ion binding"/>
    <property type="evidence" value="ECO:0007669"/>
    <property type="project" value="UniProtKB-KW"/>
</dbReference>
<dbReference type="GO" id="GO:1904047">
    <property type="term" value="F:S-adenosyl-L-methionine binding"/>
    <property type="evidence" value="ECO:0000314"/>
    <property type="project" value="UniProtKB"/>
</dbReference>
<dbReference type="GO" id="GO:0006281">
    <property type="term" value="P:DNA repair"/>
    <property type="evidence" value="ECO:0000250"/>
    <property type="project" value="UniProtKB"/>
</dbReference>
<dbReference type="GO" id="GO:0032259">
    <property type="term" value="P:methylation"/>
    <property type="evidence" value="ECO:0007669"/>
    <property type="project" value="UniProtKB-KW"/>
</dbReference>
<dbReference type="GO" id="GO:0007517">
    <property type="term" value="P:muscle organ development"/>
    <property type="evidence" value="ECO:0007669"/>
    <property type="project" value="UniProtKB-KW"/>
</dbReference>
<dbReference type="GO" id="GO:2001034">
    <property type="term" value="P:positive regulation of double-strand break repair via nonhomologous end joining"/>
    <property type="evidence" value="ECO:0000250"/>
    <property type="project" value="UniProtKB"/>
</dbReference>
<dbReference type="GO" id="GO:0045830">
    <property type="term" value="P:positive regulation of isotype switching"/>
    <property type="evidence" value="ECO:0000315"/>
    <property type="project" value="UniProtKB"/>
</dbReference>
<dbReference type="CDD" id="cd19184">
    <property type="entry name" value="SET_KMT5B"/>
    <property type="match status" value="1"/>
</dbReference>
<dbReference type="FunFam" id="1.10.10.1700:FF:000001">
    <property type="entry name" value="Histone-lysine N-methyltransferase"/>
    <property type="match status" value="1"/>
</dbReference>
<dbReference type="FunFam" id="2.170.270.10:FF:000006">
    <property type="entry name" value="Histone-lysine N-methyltransferase"/>
    <property type="match status" value="1"/>
</dbReference>
<dbReference type="Gene3D" id="1.10.10.1700">
    <property type="entry name" value="Histone-lysine N-methyltransferase"/>
    <property type="match status" value="1"/>
</dbReference>
<dbReference type="Gene3D" id="2.170.270.10">
    <property type="entry name" value="SET domain"/>
    <property type="match status" value="1"/>
</dbReference>
<dbReference type="InterPro" id="IPR041938">
    <property type="entry name" value="Hist-Lys_N-MTase_N"/>
</dbReference>
<dbReference type="InterPro" id="IPR044424">
    <property type="entry name" value="KMT5B_SET"/>
</dbReference>
<dbReference type="InterPro" id="IPR001214">
    <property type="entry name" value="SET_dom"/>
</dbReference>
<dbReference type="InterPro" id="IPR046341">
    <property type="entry name" value="SET_dom_sf"/>
</dbReference>
<dbReference type="InterPro" id="IPR039977">
    <property type="entry name" value="Suv4-20/Set9"/>
</dbReference>
<dbReference type="InterPro" id="IPR025790">
    <property type="entry name" value="Suv4-20_animal"/>
</dbReference>
<dbReference type="PANTHER" id="PTHR12977:SF12">
    <property type="entry name" value="HISTONE-LYSINE N-METHYLTRANSFERASE KMT5B"/>
    <property type="match status" value="1"/>
</dbReference>
<dbReference type="PANTHER" id="PTHR12977">
    <property type="entry name" value="SUPPRESSOR OF VARIEGATION 4-20-RELATED"/>
    <property type="match status" value="1"/>
</dbReference>
<dbReference type="Pfam" id="PF00856">
    <property type="entry name" value="SET"/>
    <property type="match status" value="1"/>
</dbReference>
<dbReference type="SMART" id="SM00317">
    <property type="entry name" value="SET"/>
    <property type="match status" value="1"/>
</dbReference>
<dbReference type="SUPFAM" id="SSF82199">
    <property type="entry name" value="SET domain"/>
    <property type="match status" value="1"/>
</dbReference>
<dbReference type="PROSITE" id="PS51570">
    <property type="entry name" value="SAM_MT43_SUVAR420_2"/>
    <property type="match status" value="1"/>
</dbReference>
<dbReference type="PROSITE" id="PS50280">
    <property type="entry name" value="SET"/>
    <property type="match status" value="1"/>
</dbReference>